<name>UBID_JANMA</name>
<reference key="1">
    <citation type="journal article" date="2007" name="PLoS Genet.">
        <title>Genome analysis of Minibacterium massiliensis highlights the convergent evolution of water-living bacteria.</title>
        <authorList>
            <person name="Audic S."/>
            <person name="Robert C."/>
            <person name="Campagna B."/>
            <person name="Parinello H."/>
            <person name="Claverie J.-M."/>
            <person name="Raoult D."/>
            <person name="Drancourt M."/>
        </authorList>
    </citation>
    <scope>NUCLEOTIDE SEQUENCE [LARGE SCALE GENOMIC DNA]</scope>
    <source>
        <strain>Marseille</strain>
    </source>
</reference>
<organism>
    <name type="scientific">Janthinobacterium sp. (strain Marseille)</name>
    <name type="common">Minibacterium massiliensis</name>
    <dbReference type="NCBI Taxonomy" id="375286"/>
    <lineage>
        <taxon>Bacteria</taxon>
        <taxon>Pseudomonadati</taxon>
        <taxon>Pseudomonadota</taxon>
        <taxon>Betaproteobacteria</taxon>
        <taxon>Burkholderiales</taxon>
        <taxon>Oxalobacteraceae</taxon>
        <taxon>Janthinobacterium</taxon>
    </lineage>
</organism>
<evidence type="ECO:0000255" key="1">
    <source>
        <dbReference type="HAMAP-Rule" id="MF_01636"/>
    </source>
</evidence>
<comment type="function">
    <text evidence="1">Catalyzes the decarboxylation of 3-octaprenyl-4-hydroxy benzoate to 2-octaprenylphenol, an intermediate step in ubiquinone biosynthesis.</text>
</comment>
<comment type="catalytic activity">
    <reaction evidence="1">
        <text>a 4-hydroxy-3-(all-trans-polyprenyl)benzoate + H(+) = a 2-(all-trans-polyprenyl)phenol + CO2</text>
        <dbReference type="Rhea" id="RHEA:41680"/>
        <dbReference type="Rhea" id="RHEA-COMP:9514"/>
        <dbReference type="Rhea" id="RHEA-COMP:9516"/>
        <dbReference type="ChEBI" id="CHEBI:1269"/>
        <dbReference type="ChEBI" id="CHEBI:15378"/>
        <dbReference type="ChEBI" id="CHEBI:16526"/>
        <dbReference type="ChEBI" id="CHEBI:78396"/>
        <dbReference type="EC" id="4.1.1.98"/>
    </reaction>
</comment>
<comment type="cofactor">
    <cofactor evidence="1">
        <name>prenylated FMN</name>
        <dbReference type="ChEBI" id="CHEBI:87746"/>
    </cofactor>
    <text evidence="1">Binds 1 prenylated FMN per subunit.</text>
</comment>
<comment type="cofactor">
    <cofactor evidence="1">
        <name>Mn(2+)</name>
        <dbReference type="ChEBI" id="CHEBI:29035"/>
    </cofactor>
</comment>
<comment type="pathway">
    <text evidence="1">Cofactor biosynthesis; ubiquinone biosynthesis.</text>
</comment>
<comment type="subunit">
    <text evidence="1">Homohexamer.</text>
</comment>
<comment type="subcellular location">
    <subcellularLocation>
        <location evidence="1">Cell membrane</location>
        <topology evidence="1">Peripheral membrane protein</topology>
    </subcellularLocation>
</comment>
<comment type="similarity">
    <text evidence="1">Belongs to the UbiD family.</text>
</comment>
<accession>A6T0H8</accession>
<keyword id="KW-1003">Cell membrane</keyword>
<keyword id="KW-0210">Decarboxylase</keyword>
<keyword id="KW-0285">Flavoprotein</keyword>
<keyword id="KW-0288">FMN</keyword>
<keyword id="KW-0456">Lyase</keyword>
<keyword id="KW-0464">Manganese</keyword>
<keyword id="KW-0472">Membrane</keyword>
<keyword id="KW-0479">Metal-binding</keyword>
<keyword id="KW-0831">Ubiquinone biosynthesis</keyword>
<dbReference type="EC" id="4.1.1.98" evidence="1"/>
<dbReference type="EMBL" id="CP000269">
    <property type="protein sequence ID" value="ABR89082.1"/>
    <property type="molecule type" value="Genomic_DNA"/>
</dbReference>
<dbReference type="RefSeq" id="WP_012080188.1">
    <property type="nucleotide sequence ID" value="NC_009659.1"/>
</dbReference>
<dbReference type="SMR" id="A6T0H8"/>
<dbReference type="STRING" id="375286.mma_2335"/>
<dbReference type="KEGG" id="mms:mma_2335"/>
<dbReference type="eggNOG" id="COG0043">
    <property type="taxonomic scope" value="Bacteria"/>
</dbReference>
<dbReference type="HOGENOM" id="CLU_023348_4_1_4"/>
<dbReference type="OrthoDB" id="9809841at2"/>
<dbReference type="UniPathway" id="UPA00232"/>
<dbReference type="Proteomes" id="UP000006388">
    <property type="component" value="Chromosome"/>
</dbReference>
<dbReference type="GO" id="GO:0005829">
    <property type="term" value="C:cytosol"/>
    <property type="evidence" value="ECO:0007669"/>
    <property type="project" value="TreeGrafter"/>
</dbReference>
<dbReference type="GO" id="GO:0005886">
    <property type="term" value="C:plasma membrane"/>
    <property type="evidence" value="ECO:0007669"/>
    <property type="project" value="UniProtKB-SubCell"/>
</dbReference>
<dbReference type="GO" id="GO:0008694">
    <property type="term" value="F:3-octaprenyl-4-hydroxybenzoate carboxy-lyase activity"/>
    <property type="evidence" value="ECO:0007669"/>
    <property type="project" value="UniProtKB-UniRule"/>
</dbReference>
<dbReference type="GO" id="GO:0046872">
    <property type="term" value="F:metal ion binding"/>
    <property type="evidence" value="ECO:0007669"/>
    <property type="project" value="UniProtKB-KW"/>
</dbReference>
<dbReference type="GO" id="GO:0006744">
    <property type="term" value="P:ubiquinone biosynthetic process"/>
    <property type="evidence" value="ECO:0007669"/>
    <property type="project" value="UniProtKB-UniRule"/>
</dbReference>
<dbReference type="FunFam" id="1.20.5.570:FF:000001">
    <property type="entry name" value="3-octaprenyl-4-hydroxybenzoate carboxy-lyase"/>
    <property type="match status" value="1"/>
</dbReference>
<dbReference type="FunFam" id="3.40.1670.10:FF:000001">
    <property type="entry name" value="3-octaprenyl-4-hydroxybenzoate carboxy-lyase"/>
    <property type="match status" value="1"/>
</dbReference>
<dbReference type="Gene3D" id="1.20.5.570">
    <property type="entry name" value="Single helix bin"/>
    <property type="match status" value="1"/>
</dbReference>
<dbReference type="Gene3D" id="3.40.1670.10">
    <property type="entry name" value="UbiD C-terminal domain-like"/>
    <property type="match status" value="1"/>
</dbReference>
<dbReference type="HAMAP" id="MF_01636">
    <property type="entry name" value="UbiD"/>
    <property type="match status" value="1"/>
</dbReference>
<dbReference type="InterPro" id="IPR002830">
    <property type="entry name" value="UbiD"/>
</dbReference>
<dbReference type="InterPro" id="IPR049381">
    <property type="entry name" value="UbiD-like_C"/>
</dbReference>
<dbReference type="InterPro" id="IPR049383">
    <property type="entry name" value="UbiD-like_N"/>
</dbReference>
<dbReference type="InterPro" id="IPR023677">
    <property type="entry name" value="UbiD_bacteria"/>
</dbReference>
<dbReference type="InterPro" id="IPR048304">
    <property type="entry name" value="UbiD_Rift_dom"/>
</dbReference>
<dbReference type="NCBIfam" id="NF008175">
    <property type="entry name" value="PRK10922.1"/>
    <property type="match status" value="1"/>
</dbReference>
<dbReference type="NCBIfam" id="TIGR00148">
    <property type="entry name" value="UbiD family decarboxylase"/>
    <property type="match status" value="1"/>
</dbReference>
<dbReference type="PANTHER" id="PTHR30108">
    <property type="entry name" value="3-OCTAPRENYL-4-HYDROXYBENZOATE CARBOXY-LYASE-RELATED"/>
    <property type="match status" value="1"/>
</dbReference>
<dbReference type="PANTHER" id="PTHR30108:SF17">
    <property type="entry name" value="FERULIC ACID DECARBOXYLASE 1"/>
    <property type="match status" value="1"/>
</dbReference>
<dbReference type="Pfam" id="PF01977">
    <property type="entry name" value="UbiD"/>
    <property type="match status" value="1"/>
</dbReference>
<dbReference type="Pfam" id="PF20696">
    <property type="entry name" value="UbiD_C"/>
    <property type="match status" value="1"/>
</dbReference>
<dbReference type="Pfam" id="PF20695">
    <property type="entry name" value="UbiD_N"/>
    <property type="match status" value="1"/>
</dbReference>
<dbReference type="SUPFAM" id="SSF50475">
    <property type="entry name" value="FMN-binding split barrel"/>
    <property type="match status" value="1"/>
</dbReference>
<dbReference type="SUPFAM" id="SSF143968">
    <property type="entry name" value="UbiD C-terminal domain-like"/>
    <property type="match status" value="1"/>
</dbReference>
<proteinExistence type="inferred from homology"/>
<gene>
    <name evidence="1" type="primary">ubiD</name>
    <name type="ordered locus">mma_2335</name>
</gene>
<sequence>MKYSDLRDFISQLQQMGELKRINVPVSPYLEMTEICDRTLRAAGPALLFEQPTGQKIPVLGNLFGTPHRVALGMGATDVSELRKIGHVLAMLKEPEPPKGFKDIMGLGSLVKSIWDMAPKELRGAPCHDIVWEGNDVDLARLPIQHCWPGDIAPLITWGLVITKGPHKKRQNLGIYRQQVIGRNKVIMRWLAQRGGALDFREHSIVNRGQPYPIAVALGADPATILGAVTPVPDSLSEYQFAGLLRGSRTELVKALGSELRVPASAEIVLEGHIYPDESHPSGYEHALEGPYGDHTGYYNEQDSFPVFTIDRITMRRDPIYHSTYTGKPPDEPAVLGVALNEVFIPLLQKQFSEILDFYLPPEGCSYRMAVVQMKKAYPGHAKRVMFGVWSFLRQFMYTKFIVVVDEDVNIRDWKEVIWAITTRVDPIRDTTLVDNTPIDYLDFASPVSGLGSKMGIDATNKWPGETDREWGRTITMTDEVKKRVDQIWQELGI</sequence>
<protein>
    <recommendedName>
        <fullName evidence="1">3-octaprenyl-4-hydroxybenzoate carboxy-lyase</fullName>
        <ecNumber evidence="1">4.1.1.98</ecNumber>
    </recommendedName>
    <alternativeName>
        <fullName evidence="1">Polyprenyl p-hydroxybenzoate decarboxylase</fullName>
    </alternativeName>
</protein>
<feature type="chain" id="PRO_1000069847" description="3-octaprenyl-4-hydroxybenzoate carboxy-lyase">
    <location>
        <begin position="1"/>
        <end position="494"/>
    </location>
</feature>
<feature type="active site" description="Proton donor" evidence="1">
    <location>
        <position position="294"/>
    </location>
</feature>
<feature type="binding site" evidence="1">
    <location>
        <position position="172"/>
    </location>
    <ligand>
        <name>Mn(2+)</name>
        <dbReference type="ChEBI" id="CHEBI:29035"/>
    </ligand>
</feature>
<feature type="binding site" evidence="1">
    <location>
        <begin position="175"/>
        <end position="177"/>
    </location>
    <ligand>
        <name>prenylated FMN</name>
        <dbReference type="ChEBI" id="CHEBI:87746"/>
    </ligand>
</feature>
<feature type="binding site" evidence="1">
    <location>
        <begin position="189"/>
        <end position="191"/>
    </location>
    <ligand>
        <name>prenylated FMN</name>
        <dbReference type="ChEBI" id="CHEBI:87746"/>
    </ligand>
</feature>
<feature type="binding site" evidence="1">
    <location>
        <begin position="194"/>
        <end position="195"/>
    </location>
    <ligand>
        <name>prenylated FMN</name>
        <dbReference type="ChEBI" id="CHEBI:87746"/>
    </ligand>
</feature>
<feature type="binding site" evidence="1">
    <location>
        <position position="238"/>
    </location>
    <ligand>
        <name>Mn(2+)</name>
        <dbReference type="ChEBI" id="CHEBI:29035"/>
    </ligand>
</feature>